<comment type="function">
    <text evidence="1">Required for rescue of stalled ribosomes mediated by trans-translation. Binds to transfer-messenger RNA (tmRNA), required for stable association of tmRNA with ribosomes. tmRNA and SmpB together mimic tRNA shape, replacing the anticodon stem-loop with SmpB. tmRNA is encoded by the ssrA gene; the 2 termini fold to resemble tRNA(Ala) and it encodes a 'tag peptide', a short internal open reading frame. During trans-translation Ala-aminoacylated tmRNA acts like a tRNA, entering the A-site of stalled ribosomes, displacing the stalled mRNA. The ribosome then switches to translate the ORF on the tmRNA; the nascent peptide is terminated with the 'tag peptide' encoded by the tmRNA and targeted for degradation. The ribosome is freed to recommence translation, which seems to be the essential function of trans-translation.</text>
</comment>
<comment type="subcellular location">
    <subcellularLocation>
        <location evidence="1">Cytoplasm</location>
    </subcellularLocation>
    <text evidence="1">The tmRNA-SmpB complex associates with stalled 70S ribosomes.</text>
</comment>
<comment type="similarity">
    <text evidence="1">Belongs to the SmpB family.</text>
</comment>
<dbReference type="EMBL" id="CP001037">
    <property type="protein sequence ID" value="ACC79230.1"/>
    <property type="molecule type" value="Genomic_DNA"/>
</dbReference>
<dbReference type="RefSeq" id="WP_012407256.1">
    <property type="nucleotide sequence ID" value="NC_010628.1"/>
</dbReference>
<dbReference type="SMR" id="B2J722"/>
<dbReference type="STRING" id="63737.Npun_F0451"/>
<dbReference type="EnsemblBacteria" id="ACC79230">
    <property type="protein sequence ID" value="ACC79230"/>
    <property type="gene ID" value="Npun_F0451"/>
</dbReference>
<dbReference type="KEGG" id="npu:Npun_F0451"/>
<dbReference type="eggNOG" id="COG0691">
    <property type="taxonomic scope" value="Bacteria"/>
</dbReference>
<dbReference type="HOGENOM" id="CLU_108953_0_1_3"/>
<dbReference type="OrthoDB" id="9805462at2"/>
<dbReference type="PhylomeDB" id="B2J722"/>
<dbReference type="Proteomes" id="UP000001191">
    <property type="component" value="Chromosome"/>
</dbReference>
<dbReference type="GO" id="GO:0005829">
    <property type="term" value="C:cytosol"/>
    <property type="evidence" value="ECO:0007669"/>
    <property type="project" value="TreeGrafter"/>
</dbReference>
<dbReference type="GO" id="GO:0003723">
    <property type="term" value="F:RNA binding"/>
    <property type="evidence" value="ECO:0007669"/>
    <property type="project" value="UniProtKB-UniRule"/>
</dbReference>
<dbReference type="GO" id="GO:0070929">
    <property type="term" value="P:trans-translation"/>
    <property type="evidence" value="ECO:0007669"/>
    <property type="project" value="UniProtKB-UniRule"/>
</dbReference>
<dbReference type="CDD" id="cd09294">
    <property type="entry name" value="SmpB"/>
    <property type="match status" value="1"/>
</dbReference>
<dbReference type="Gene3D" id="2.40.280.10">
    <property type="match status" value="1"/>
</dbReference>
<dbReference type="HAMAP" id="MF_00023">
    <property type="entry name" value="SmpB"/>
    <property type="match status" value="1"/>
</dbReference>
<dbReference type="InterPro" id="IPR023620">
    <property type="entry name" value="SmpB"/>
</dbReference>
<dbReference type="InterPro" id="IPR000037">
    <property type="entry name" value="SsrA-bd_prot"/>
</dbReference>
<dbReference type="InterPro" id="IPR020081">
    <property type="entry name" value="SsrA-bd_prot_CS"/>
</dbReference>
<dbReference type="NCBIfam" id="NF003843">
    <property type="entry name" value="PRK05422.1"/>
    <property type="match status" value="1"/>
</dbReference>
<dbReference type="NCBIfam" id="TIGR00086">
    <property type="entry name" value="smpB"/>
    <property type="match status" value="1"/>
</dbReference>
<dbReference type="PANTHER" id="PTHR30308:SF2">
    <property type="entry name" value="SSRA-BINDING PROTEIN"/>
    <property type="match status" value="1"/>
</dbReference>
<dbReference type="PANTHER" id="PTHR30308">
    <property type="entry name" value="TMRNA-BINDING COMPONENT OF TRANS-TRANSLATION TAGGING COMPLEX"/>
    <property type="match status" value="1"/>
</dbReference>
<dbReference type="Pfam" id="PF01668">
    <property type="entry name" value="SmpB"/>
    <property type="match status" value="1"/>
</dbReference>
<dbReference type="SUPFAM" id="SSF74982">
    <property type="entry name" value="Small protein B (SmpB)"/>
    <property type="match status" value="1"/>
</dbReference>
<dbReference type="PROSITE" id="PS01317">
    <property type="entry name" value="SSRP"/>
    <property type="match status" value="1"/>
</dbReference>
<sequence>MSDKNEGYKVIADNRQARYLYEILETYEAGIELTGTEVKSIRAGKVNLQDGYALLRNGEAWLINIHISPYNASGQYFNHEPRRTRKLLLHRQELRKLIGKVEQQGLTLIPLKMYLKRGWVKVSIALGKGKKLHDKREDLKRRQDQRDIQRAMKSY</sequence>
<name>SSRP_NOSP7</name>
<organism>
    <name type="scientific">Nostoc punctiforme (strain ATCC 29133 / PCC 73102)</name>
    <dbReference type="NCBI Taxonomy" id="63737"/>
    <lineage>
        <taxon>Bacteria</taxon>
        <taxon>Bacillati</taxon>
        <taxon>Cyanobacteriota</taxon>
        <taxon>Cyanophyceae</taxon>
        <taxon>Nostocales</taxon>
        <taxon>Nostocaceae</taxon>
        <taxon>Nostoc</taxon>
    </lineage>
</organism>
<evidence type="ECO:0000255" key="1">
    <source>
        <dbReference type="HAMAP-Rule" id="MF_00023"/>
    </source>
</evidence>
<evidence type="ECO:0000256" key="2">
    <source>
        <dbReference type="SAM" id="MobiDB-lite"/>
    </source>
</evidence>
<gene>
    <name evidence="1" type="primary">smpB</name>
    <name type="ordered locus">Npun_F0451</name>
</gene>
<protein>
    <recommendedName>
        <fullName evidence="1">SsrA-binding protein</fullName>
    </recommendedName>
    <alternativeName>
        <fullName evidence="1">Small protein B</fullName>
    </alternativeName>
</protein>
<feature type="chain" id="PRO_1000090169" description="SsrA-binding protein">
    <location>
        <begin position="1"/>
        <end position="155"/>
    </location>
</feature>
<feature type="region of interest" description="Disordered" evidence="2">
    <location>
        <begin position="136"/>
        <end position="155"/>
    </location>
</feature>
<keyword id="KW-0963">Cytoplasm</keyword>
<keyword id="KW-1185">Reference proteome</keyword>
<keyword id="KW-0694">RNA-binding</keyword>
<proteinExistence type="inferred from homology"/>
<reference key="1">
    <citation type="journal article" date="2013" name="Plant Physiol.">
        <title>A Nostoc punctiforme Sugar Transporter Necessary to Establish a Cyanobacterium-Plant Symbiosis.</title>
        <authorList>
            <person name="Ekman M."/>
            <person name="Picossi S."/>
            <person name="Campbell E.L."/>
            <person name="Meeks J.C."/>
            <person name="Flores E."/>
        </authorList>
    </citation>
    <scope>NUCLEOTIDE SEQUENCE [LARGE SCALE GENOMIC DNA]</scope>
    <source>
        <strain>ATCC 29133 / PCC 73102</strain>
    </source>
</reference>
<accession>B2J722</accession>